<protein>
    <recommendedName>
        <fullName>Lycopene beta cyclase, chloroplastic/chromoplastic</fullName>
        <ecNumber>5.5.1.19</ecNumber>
    </recommendedName>
</protein>
<dbReference type="EC" id="5.5.1.19"/>
<dbReference type="EMBL" id="X98796">
    <property type="protein sequence ID" value="CAA67331.1"/>
    <property type="molecule type" value="mRNA"/>
</dbReference>
<dbReference type="SMR" id="Q40424"/>
<dbReference type="BioCyc" id="MetaCyc:MONOMER-18248"/>
<dbReference type="UniPathway" id="UPA00802"/>
<dbReference type="UniPathway" id="UPA00805"/>
<dbReference type="GO" id="GO:0031969">
    <property type="term" value="C:chloroplast membrane"/>
    <property type="evidence" value="ECO:0007669"/>
    <property type="project" value="UniProtKB-SubCell"/>
</dbReference>
<dbReference type="GO" id="GO:0046862">
    <property type="term" value="C:chromoplast membrane"/>
    <property type="evidence" value="ECO:0007669"/>
    <property type="project" value="UniProtKB-SubCell"/>
</dbReference>
<dbReference type="GO" id="GO:0016860">
    <property type="term" value="F:intramolecular oxidoreductase activity"/>
    <property type="evidence" value="ECO:0007669"/>
    <property type="project" value="UniProtKB-ARBA"/>
</dbReference>
<dbReference type="GO" id="GO:0016705">
    <property type="term" value="F:oxidoreductase activity, acting on paired donors, with incorporation or reduction of molecular oxygen"/>
    <property type="evidence" value="ECO:0007669"/>
    <property type="project" value="InterPro"/>
</dbReference>
<dbReference type="GO" id="GO:0016117">
    <property type="term" value="P:carotenoid biosynthetic process"/>
    <property type="evidence" value="ECO:0007669"/>
    <property type="project" value="UniProtKB-KW"/>
</dbReference>
<dbReference type="FunFam" id="3.50.50.60:FF:000101">
    <property type="entry name" value="lycopene epsilon cyclase, chloroplastic"/>
    <property type="match status" value="1"/>
</dbReference>
<dbReference type="Gene3D" id="3.50.50.60">
    <property type="entry name" value="FAD/NAD(P)-binding domain"/>
    <property type="match status" value="1"/>
</dbReference>
<dbReference type="InterPro" id="IPR036188">
    <property type="entry name" value="FAD/NAD-bd_sf"/>
</dbReference>
<dbReference type="InterPro" id="IPR010108">
    <property type="entry name" value="Lycopene_cyclase_b/e"/>
</dbReference>
<dbReference type="NCBIfam" id="TIGR01790">
    <property type="entry name" value="carotene-cycl"/>
    <property type="match status" value="1"/>
</dbReference>
<dbReference type="PANTHER" id="PTHR39757">
    <property type="match status" value="1"/>
</dbReference>
<dbReference type="PANTHER" id="PTHR39757:SF5">
    <property type="entry name" value="OS02G0190600 PROTEIN"/>
    <property type="match status" value="1"/>
</dbReference>
<dbReference type="Pfam" id="PF05834">
    <property type="entry name" value="Lycopene_cycl"/>
    <property type="match status" value="1"/>
</dbReference>
<dbReference type="SUPFAM" id="SSF51905">
    <property type="entry name" value="FAD/NAD(P)-binding domain"/>
    <property type="match status" value="1"/>
</dbReference>
<organism>
    <name type="scientific">Narcissus pseudonarcissus</name>
    <name type="common">Daffodil</name>
    <dbReference type="NCBI Taxonomy" id="39639"/>
    <lineage>
        <taxon>Eukaryota</taxon>
        <taxon>Viridiplantae</taxon>
        <taxon>Streptophyta</taxon>
        <taxon>Embryophyta</taxon>
        <taxon>Tracheophyta</taxon>
        <taxon>Spermatophyta</taxon>
        <taxon>Magnoliopsida</taxon>
        <taxon>Liliopsida</taxon>
        <taxon>Asparagales</taxon>
        <taxon>Amaryllidaceae</taxon>
        <taxon>Amaryllidoideae</taxon>
        <taxon>Narcissus</taxon>
    </lineage>
</organism>
<evidence type="ECO:0000255" key="1"/>
<evidence type="ECO:0000269" key="2">
    <source>
    </source>
</evidence>
<evidence type="ECO:0000305" key="3"/>
<feature type="transit peptide" description="Chloroplast and chromoplast" evidence="1">
    <location>
        <begin position="1"/>
        <end position="85"/>
    </location>
</feature>
<feature type="chain" id="PRO_0000018432" description="Lycopene beta cyclase, chloroplastic/chromoplastic">
    <location>
        <begin position="86"/>
        <end position="503"/>
    </location>
</feature>
<feature type="binding site" evidence="1">
    <location>
        <begin position="90"/>
        <end position="117"/>
    </location>
    <ligand>
        <name>NAD(+)</name>
        <dbReference type="ChEBI" id="CHEBI:57540"/>
    </ligand>
</feature>
<comment type="function">
    <text>Catalyzes the double cyclization reaction which converts lycopene to beta-carotene and neurosporene to beta-zeacarotene.</text>
</comment>
<comment type="catalytic activity">
    <reaction>
        <text>a carotenoid psi-end group = a carotenoid beta-end derivative</text>
        <dbReference type="Rhea" id="RHEA:55620"/>
        <dbReference type="ChEBI" id="CHEBI:139114"/>
        <dbReference type="ChEBI" id="CHEBI:139120"/>
        <dbReference type="EC" id="5.5.1.19"/>
    </reaction>
</comment>
<comment type="pathway">
    <text>Carotenoid biosynthesis; beta-carotene biosynthesis.</text>
</comment>
<comment type="pathway">
    <text>Carotenoid biosynthesis; beta-zeacarotene biosynthesis.</text>
</comment>
<comment type="subcellular location">
    <subcellularLocation>
        <location evidence="2">Plastid</location>
        <location evidence="2">Chloroplast</location>
    </subcellularLocation>
    <subcellularLocation>
        <location evidence="2">Plastid</location>
        <location evidence="2">Chromoplast</location>
    </subcellularLocation>
    <subcellularLocation>
        <location evidence="2">Plastid</location>
        <location evidence="2">Chromoplast membrane</location>
    </subcellularLocation>
    <subcellularLocation>
        <location evidence="2">Plastid</location>
        <location evidence="2">Chloroplast membrane</location>
    </subcellularLocation>
    <text evidence="3">Exists as an inactive soluble form and an active membrane-bound form.</text>
</comment>
<comment type="similarity">
    <text evidence="3">Belongs to the lycopene cyclase family.</text>
</comment>
<name>LCYB_NARPS</name>
<keyword id="KW-0125">Carotenoid biosynthesis</keyword>
<keyword id="KW-0150">Chloroplast</keyword>
<keyword id="KW-0957">Chromoplast</keyword>
<keyword id="KW-0413">Isomerase</keyword>
<keyword id="KW-0472">Membrane</keyword>
<keyword id="KW-0520">NAD</keyword>
<keyword id="KW-0934">Plastid</keyword>
<keyword id="KW-0809">Transit peptide</keyword>
<proteinExistence type="evidence at transcript level"/>
<sequence length="503" mass="56911">MDTLLRTHNRLELLYPLHELAKRHFLSPSPNPQNPNFKFFSRKPYQKKCRNGYIGVSSNQLLDLVPEIKKEHLEFDLPLYDPSKALTLDLAVVGGGPLARSCSTSLGGGLSVVSIDPNPKLIWPNNYGVWVDEFEDMDLLDCLDATWSGAIVYVDDRSTKNLSRPYARVNRKNLKSKMMKKCVSNGVRFHQATVVKAMHEEEKSYLICSDGVTIDARVVLDATGFSRCLVQYDKPYNPGYQVAYGILAEVEEHPFDVDKMVFMDWRDSHLNGKAELNERNAKIPTFLYAMPFSSNRIFLEETSLVARPGLKMEDIQERMVARLNHLGIRIKSIEEDERCVIPMGGPLPVIPQRVVGIGGTAGMVHPSTGYMVARTLAAAPIVANSIVQYLVSDSGLSGNDLSADVWKDLWPIERRRQREFFCFGMDILLKLDLEGTRRFFDAFFDLEPRYWHGFLSSRLFLPELVPFGLSLFSHASNTCKLEIMAKGTLPLVNMINNLVQDRD</sequence>
<reference key="1">
    <citation type="online journal article" date="1996" name="Plant Gene Register">
        <title>A cDNA encoding lycopene cyclase from Narcissus pseudonarcissus L.</title>
        <authorList>
            <person name="Al-Babili S."/>
            <person name="Hobeika E."/>
            <person name="Beyer P."/>
        </authorList>
        <locator>PGR96-107</locator>
    </citation>
    <scope>NUCLEOTIDE SEQUENCE [MRNA]</scope>
    <source>
        <tissue>Paracorolla</tissue>
    </source>
</reference>
<reference key="2">
    <citation type="journal article" date="1997" name="Eur. J. Biochem.">
        <title>Chloroplast import of four carotenoid biosynthetic enzymes in vitro reveals differential fates prior to membrane binding and oligomeric assembly.</title>
        <authorList>
            <person name="Bonk M."/>
            <person name="Hoffmann B."/>
            <person name="von Lintig J."/>
            <person name="Schledz M."/>
            <person name="Al-Babili S."/>
            <person name="Hobeika E."/>
            <person name="Kleinig H."/>
            <person name="Beyer P."/>
        </authorList>
    </citation>
    <scope>SUBCELLULAR LOCATION</scope>
</reference>
<accession>Q40424</accession>
<gene>
    <name type="primary">LCY1</name>
    <name type="synonym">LYC</name>
</gene>